<organism>
    <name type="scientific">Dictyostelium discoideum</name>
    <name type="common">Social amoeba</name>
    <dbReference type="NCBI Taxonomy" id="44689"/>
    <lineage>
        <taxon>Eukaryota</taxon>
        <taxon>Amoebozoa</taxon>
        <taxon>Evosea</taxon>
        <taxon>Eumycetozoa</taxon>
        <taxon>Dictyostelia</taxon>
        <taxon>Dictyosteliales</taxon>
        <taxon>Dictyosteliaceae</taxon>
        <taxon>Dictyostelium</taxon>
    </lineage>
</organism>
<feature type="chain" id="PRO_0000330453" description="GATA zinc finger domain-containing protein 20">
    <location>
        <begin position="1"/>
        <end position="312"/>
    </location>
</feature>
<feature type="zinc finger region" description="GATA-type" evidence="1">
    <location>
        <begin position="260"/>
        <end position="287"/>
    </location>
</feature>
<feature type="region of interest" description="Disordered" evidence="2">
    <location>
        <begin position="1"/>
        <end position="45"/>
    </location>
</feature>
<feature type="region of interest" description="Disordered" evidence="2">
    <location>
        <begin position="213"/>
        <end position="232"/>
    </location>
</feature>
<feature type="compositionally biased region" description="Low complexity" evidence="2">
    <location>
        <begin position="29"/>
        <end position="45"/>
    </location>
</feature>
<proteinExistence type="predicted"/>
<dbReference type="EMBL" id="AAFI02000037">
    <property type="protein sequence ID" value="EAL67121.1"/>
    <property type="molecule type" value="Genomic_DNA"/>
</dbReference>
<dbReference type="RefSeq" id="XP_641094.1">
    <property type="nucleotide sequence ID" value="XM_636002.1"/>
</dbReference>
<dbReference type="SMR" id="Q54V37"/>
<dbReference type="STRING" id="44689.Q54V37"/>
<dbReference type="GlyGen" id="Q54V37">
    <property type="glycosylation" value="1 site"/>
</dbReference>
<dbReference type="PaxDb" id="44689-DDB0216330"/>
<dbReference type="EnsemblProtists" id="EAL67121">
    <property type="protein sequence ID" value="EAL67121"/>
    <property type="gene ID" value="DDB_G0280639"/>
</dbReference>
<dbReference type="GeneID" id="8622653"/>
<dbReference type="KEGG" id="ddi:DDB_G0280639"/>
<dbReference type="dictyBase" id="DDB_G0280639">
    <property type="gene designation" value="gtaT"/>
</dbReference>
<dbReference type="VEuPathDB" id="AmoebaDB:DDB_G0280639"/>
<dbReference type="HOGENOM" id="CLU_944688_0_0_1"/>
<dbReference type="InParanoid" id="Q54V37"/>
<dbReference type="Reactome" id="R-DDI-5689880">
    <property type="pathway name" value="Ub-specific processing proteases"/>
</dbReference>
<dbReference type="Reactome" id="R-DDI-9018519">
    <property type="pathway name" value="Estrogen-dependent gene expression"/>
</dbReference>
<dbReference type="PRO" id="PR:Q54V37"/>
<dbReference type="Proteomes" id="UP000002195">
    <property type="component" value="Chromosome 3"/>
</dbReference>
<dbReference type="GO" id="GO:0005634">
    <property type="term" value="C:nucleus"/>
    <property type="evidence" value="ECO:0000318"/>
    <property type="project" value="GO_Central"/>
</dbReference>
<dbReference type="GO" id="GO:0000981">
    <property type="term" value="F:DNA-binding transcription factor activity, RNA polymerase II-specific"/>
    <property type="evidence" value="ECO:0000318"/>
    <property type="project" value="GO_Central"/>
</dbReference>
<dbReference type="GO" id="GO:0000978">
    <property type="term" value="F:RNA polymerase II cis-regulatory region sequence-specific DNA binding"/>
    <property type="evidence" value="ECO:0000318"/>
    <property type="project" value="GO_Central"/>
</dbReference>
<dbReference type="GO" id="GO:0008270">
    <property type="term" value="F:zinc ion binding"/>
    <property type="evidence" value="ECO:0007669"/>
    <property type="project" value="UniProtKB-KW"/>
</dbReference>
<dbReference type="GO" id="GO:0000122">
    <property type="term" value="P:negative regulation of transcription by RNA polymerase II"/>
    <property type="evidence" value="ECO:0000318"/>
    <property type="project" value="GO_Central"/>
</dbReference>
<dbReference type="GO" id="GO:0045944">
    <property type="term" value="P:positive regulation of transcription by RNA polymerase II"/>
    <property type="evidence" value="ECO:0000318"/>
    <property type="project" value="GO_Central"/>
</dbReference>
<dbReference type="CDD" id="cd00202">
    <property type="entry name" value="ZnF_GATA"/>
    <property type="match status" value="1"/>
</dbReference>
<dbReference type="Gene3D" id="3.30.50.10">
    <property type="entry name" value="Erythroid Transcription Factor GATA-1, subunit A"/>
    <property type="match status" value="1"/>
</dbReference>
<dbReference type="InterPro" id="IPR000679">
    <property type="entry name" value="Znf_GATA"/>
</dbReference>
<dbReference type="InterPro" id="IPR013088">
    <property type="entry name" value="Znf_NHR/GATA"/>
</dbReference>
<dbReference type="Pfam" id="PF00320">
    <property type="entry name" value="GATA"/>
    <property type="match status" value="1"/>
</dbReference>
<dbReference type="SMART" id="SM00401">
    <property type="entry name" value="ZnF_GATA"/>
    <property type="match status" value="1"/>
</dbReference>
<dbReference type="SUPFAM" id="SSF57716">
    <property type="entry name" value="Glucocorticoid receptor-like (DNA-binding domain)"/>
    <property type="match status" value="1"/>
</dbReference>
<dbReference type="PROSITE" id="PS50114">
    <property type="entry name" value="GATA_ZN_FINGER_2"/>
    <property type="match status" value="1"/>
</dbReference>
<protein>
    <recommendedName>
        <fullName>GATA zinc finger domain-containing protein 20</fullName>
    </recommendedName>
</protein>
<evidence type="ECO:0000255" key="1">
    <source>
        <dbReference type="PROSITE-ProRule" id="PRU00094"/>
    </source>
</evidence>
<evidence type="ECO:0000256" key="2">
    <source>
        <dbReference type="SAM" id="MobiDB-lite"/>
    </source>
</evidence>
<sequence>MGKRKPIPSINIGNNLNKKLKFSKQDSDQQQQQQQEQQPQQPQQPIIKYKSKREKEIHEKIDKIKSERKFIYKNAERHVKLSLEYAGLALSLPAVLKDLHRALEKFDALESSLIAELESLKIPVKNASTIPVLHPPINHVNTSIATTAAASINNNNNNDNTITTTTTTTTISNDNLASTTNSLPVNSVPRTTATLSDVNSLITATLGPTTAPTIGSSATTGDTTAIDGTNTNVTTDTTTIETTMKKKGRPPLFKEIPENCYVCGVTETPYWRRGTDEGVMVDLCNACGLRYMKLEKKERLLKQKNSTSNVLN</sequence>
<keyword id="KW-0479">Metal-binding</keyword>
<keyword id="KW-1185">Reference proteome</keyword>
<keyword id="KW-0862">Zinc</keyword>
<keyword id="KW-0863">Zinc-finger</keyword>
<name>GTAT_DICDI</name>
<accession>Q54V37</accession>
<reference key="1">
    <citation type="journal article" date="2005" name="Nature">
        <title>The genome of the social amoeba Dictyostelium discoideum.</title>
        <authorList>
            <person name="Eichinger L."/>
            <person name="Pachebat J.A."/>
            <person name="Gloeckner G."/>
            <person name="Rajandream M.A."/>
            <person name="Sucgang R."/>
            <person name="Berriman M."/>
            <person name="Song J."/>
            <person name="Olsen R."/>
            <person name="Szafranski K."/>
            <person name="Xu Q."/>
            <person name="Tunggal B."/>
            <person name="Kummerfeld S."/>
            <person name="Madera M."/>
            <person name="Konfortov B.A."/>
            <person name="Rivero F."/>
            <person name="Bankier A.T."/>
            <person name="Lehmann R."/>
            <person name="Hamlin N."/>
            <person name="Davies R."/>
            <person name="Gaudet P."/>
            <person name="Fey P."/>
            <person name="Pilcher K."/>
            <person name="Chen G."/>
            <person name="Saunders D."/>
            <person name="Sodergren E.J."/>
            <person name="Davis P."/>
            <person name="Kerhornou A."/>
            <person name="Nie X."/>
            <person name="Hall N."/>
            <person name="Anjard C."/>
            <person name="Hemphill L."/>
            <person name="Bason N."/>
            <person name="Farbrother P."/>
            <person name="Desany B."/>
            <person name="Just E."/>
            <person name="Morio T."/>
            <person name="Rost R."/>
            <person name="Churcher C.M."/>
            <person name="Cooper J."/>
            <person name="Haydock S."/>
            <person name="van Driessche N."/>
            <person name="Cronin A."/>
            <person name="Goodhead I."/>
            <person name="Muzny D.M."/>
            <person name="Mourier T."/>
            <person name="Pain A."/>
            <person name="Lu M."/>
            <person name="Harper D."/>
            <person name="Lindsay R."/>
            <person name="Hauser H."/>
            <person name="James K.D."/>
            <person name="Quiles M."/>
            <person name="Madan Babu M."/>
            <person name="Saito T."/>
            <person name="Buchrieser C."/>
            <person name="Wardroper A."/>
            <person name="Felder M."/>
            <person name="Thangavelu M."/>
            <person name="Johnson D."/>
            <person name="Knights A."/>
            <person name="Loulseged H."/>
            <person name="Mungall K.L."/>
            <person name="Oliver K."/>
            <person name="Price C."/>
            <person name="Quail M.A."/>
            <person name="Urushihara H."/>
            <person name="Hernandez J."/>
            <person name="Rabbinowitsch E."/>
            <person name="Steffen D."/>
            <person name="Sanders M."/>
            <person name="Ma J."/>
            <person name="Kohara Y."/>
            <person name="Sharp S."/>
            <person name="Simmonds M.N."/>
            <person name="Spiegler S."/>
            <person name="Tivey A."/>
            <person name="Sugano S."/>
            <person name="White B."/>
            <person name="Walker D."/>
            <person name="Woodward J.R."/>
            <person name="Winckler T."/>
            <person name="Tanaka Y."/>
            <person name="Shaulsky G."/>
            <person name="Schleicher M."/>
            <person name="Weinstock G.M."/>
            <person name="Rosenthal A."/>
            <person name="Cox E.C."/>
            <person name="Chisholm R.L."/>
            <person name="Gibbs R.A."/>
            <person name="Loomis W.F."/>
            <person name="Platzer M."/>
            <person name="Kay R.R."/>
            <person name="Williams J.G."/>
            <person name="Dear P.H."/>
            <person name="Noegel A.A."/>
            <person name="Barrell B.G."/>
            <person name="Kuspa A."/>
        </authorList>
    </citation>
    <scope>NUCLEOTIDE SEQUENCE [LARGE SCALE GENOMIC DNA]</scope>
    <source>
        <strain>AX4</strain>
    </source>
</reference>
<gene>
    <name type="primary">gtaT</name>
    <name type="ORF">DDB_G0280639</name>
</gene>